<dbReference type="EMBL" id="CP000774">
    <property type="protein sequence ID" value="ABS61841.1"/>
    <property type="molecule type" value="Genomic_DNA"/>
</dbReference>
<dbReference type="RefSeq" id="WP_011995132.1">
    <property type="nucleotide sequence ID" value="NC_009719.1"/>
</dbReference>
<dbReference type="SMR" id="A7HPK8"/>
<dbReference type="STRING" id="402881.Plav_0218"/>
<dbReference type="KEGG" id="pla:Plav_0218"/>
<dbReference type="eggNOG" id="COG0291">
    <property type="taxonomic scope" value="Bacteria"/>
</dbReference>
<dbReference type="HOGENOM" id="CLU_169643_2_1_5"/>
<dbReference type="OrthoDB" id="9804851at2"/>
<dbReference type="Proteomes" id="UP000006377">
    <property type="component" value="Chromosome"/>
</dbReference>
<dbReference type="GO" id="GO:0022625">
    <property type="term" value="C:cytosolic large ribosomal subunit"/>
    <property type="evidence" value="ECO:0007669"/>
    <property type="project" value="TreeGrafter"/>
</dbReference>
<dbReference type="GO" id="GO:0003735">
    <property type="term" value="F:structural constituent of ribosome"/>
    <property type="evidence" value="ECO:0007669"/>
    <property type="project" value="InterPro"/>
</dbReference>
<dbReference type="GO" id="GO:0006412">
    <property type="term" value="P:translation"/>
    <property type="evidence" value="ECO:0007669"/>
    <property type="project" value="UniProtKB-UniRule"/>
</dbReference>
<dbReference type="FunFam" id="4.10.410.60:FF:000001">
    <property type="entry name" value="50S ribosomal protein L35"/>
    <property type="match status" value="1"/>
</dbReference>
<dbReference type="Gene3D" id="4.10.410.60">
    <property type="match status" value="1"/>
</dbReference>
<dbReference type="HAMAP" id="MF_00514">
    <property type="entry name" value="Ribosomal_bL35"/>
    <property type="match status" value="1"/>
</dbReference>
<dbReference type="InterPro" id="IPR001706">
    <property type="entry name" value="Ribosomal_bL35"/>
</dbReference>
<dbReference type="InterPro" id="IPR021137">
    <property type="entry name" value="Ribosomal_bL35-like"/>
</dbReference>
<dbReference type="InterPro" id="IPR037229">
    <property type="entry name" value="Ribosomal_bL35_sf"/>
</dbReference>
<dbReference type="NCBIfam" id="TIGR00001">
    <property type="entry name" value="rpmI_bact"/>
    <property type="match status" value="1"/>
</dbReference>
<dbReference type="PANTHER" id="PTHR33343">
    <property type="entry name" value="54S RIBOSOMAL PROTEIN BL35M"/>
    <property type="match status" value="1"/>
</dbReference>
<dbReference type="PANTHER" id="PTHR33343:SF1">
    <property type="entry name" value="LARGE RIBOSOMAL SUBUNIT PROTEIN BL35M"/>
    <property type="match status" value="1"/>
</dbReference>
<dbReference type="Pfam" id="PF01632">
    <property type="entry name" value="Ribosomal_L35p"/>
    <property type="match status" value="1"/>
</dbReference>
<dbReference type="PRINTS" id="PR00064">
    <property type="entry name" value="RIBOSOMALL35"/>
</dbReference>
<dbReference type="SUPFAM" id="SSF143034">
    <property type="entry name" value="L35p-like"/>
    <property type="match status" value="1"/>
</dbReference>
<feature type="chain" id="PRO_1000072479" description="Large ribosomal subunit protein bL35">
    <location>
        <begin position="1"/>
        <end position="66"/>
    </location>
</feature>
<name>RL35_PARL1</name>
<evidence type="ECO:0000255" key="1">
    <source>
        <dbReference type="HAMAP-Rule" id="MF_00514"/>
    </source>
</evidence>
<evidence type="ECO:0000305" key="2"/>
<reference key="1">
    <citation type="journal article" date="2011" name="Stand. Genomic Sci.">
        <title>Complete genome sequence of Parvibaculum lavamentivorans type strain (DS-1(T)).</title>
        <authorList>
            <person name="Schleheck D."/>
            <person name="Weiss M."/>
            <person name="Pitluck S."/>
            <person name="Bruce D."/>
            <person name="Land M.L."/>
            <person name="Han S."/>
            <person name="Saunders E."/>
            <person name="Tapia R."/>
            <person name="Detter C."/>
            <person name="Brettin T."/>
            <person name="Han J."/>
            <person name="Woyke T."/>
            <person name="Goodwin L."/>
            <person name="Pennacchio L."/>
            <person name="Nolan M."/>
            <person name="Cook A.M."/>
            <person name="Kjelleberg S."/>
            <person name="Thomas T."/>
        </authorList>
    </citation>
    <scope>NUCLEOTIDE SEQUENCE [LARGE SCALE GENOMIC DNA]</scope>
    <source>
        <strain>DS-1 / DSM 13023 / NCIMB 13966</strain>
    </source>
</reference>
<organism>
    <name type="scientific">Parvibaculum lavamentivorans (strain DS-1 / DSM 13023 / NCIMB 13966)</name>
    <dbReference type="NCBI Taxonomy" id="402881"/>
    <lineage>
        <taxon>Bacteria</taxon>
        <taxon>Pseudomonadati</taxon>
        <taxon>Pseudomonadota</taxon>
        <taxon>Alphaproteobacteria</taxon>
        <taxon>Hyphomicrobiales</taxon>
        <taxon>Parvibaculaceae</taxon>
        <taxon>Parvibaculum</taxon>
    </lineage>
</organism>
<accession>A7HPK8</accession>
<protein>
    <recommendedName>
        <fullName evidence="1">Large ribosomal subunit protein bL35</fullName>
    </recommendedName>
    <alternativeName>
        <fullName evidence="2">50S ribosomal protein L35</fullName>
    </alternativeName>
</protein>
<proteinExistence type="inferred from homology"/>
<comment type="similarity">
    <text evidence="1">Belongs to the bacterial ribosomal protein bL35 family.</text>
</comment>
<keyword id="KW-1185">Reference proteome</keyword>
<keyword id="KW-0687">Ribonucleoprotein</keyword>
<keyword id="KW-0689">Ribosomal protein</keyword>
<gene>
    <name evidence="1" type="primary">rpmI</name>
    <name type="ordered locus">Plav_0218</name>
</gene>
<sequence>MPKLKTKSGTKKRFKLTASGKVKRGQTGKRHGMIKRTNKQIRNKRGTTIMADADAARVIKNFMPYA</sequence>